<sequence>MFRVLNDDVYSPAEIQQQNPLAFGKASSLFTDNRSANDQCETGENVRESGQDHVKRPMNAFIVWSRERRRKVALENPKMQNSEISKQLGYEWKRLTDAEKRPFFEEAQRLLAVHRDKYPGYKYRPRRKTKRQQKLLPADSSKLCKQMHIETLQPFIYRDGCANTTGSRMESQLSLSQSVTITNSFFQNEHHRSWTNLGHNRVTLATQISADFPFYQSLQPGLSCAYFQY</sequence>
<accession>Q863C2</accession>
<proteinExistence type="inferred from homology"/>
<organism>
    <name type="scientific">Axis porcinus</name>
    <name type="common">Hog deer</name>
    <dbReference type="NCBI Taxonomy" id="57737"/>
    <lineage>
        <taxon>Eukaryota</taxon>
        <taxon>Metazoa</taxon>
        <taxon>Chordata</taxon>
        <taxon>Craniata</taxon>
        <taxon>Vertebrata</taxon>
        <taxon>Euteleostomi</taxon>
        <taxon>Mammalia</taxon>
        <taxon>Eutheria</taxon>
        <taxon>Laurasiatheria</taxon>
        <taxon>Artiodactyla</taxon>
        <taxon>Ruminantia</taxon>
        <taxon>Pecora</taxon>
        <taxon>Cervidae</taxon>
        <taxon>Cervinae</taxon>
        <taxon>Axis</taxon>
    </lineage>
</organism>
<comment type="function">
    <text evidence="1 2">Transcriptional regulator that controls a genetic switch in male development. It is necessary and sufficient for initiating male sex determination by directing the development of supporting cell precursors (pre-Sertoli cells) as Sertoli rather than granulosa cells. Involved in different aspects of gene regulation including promoter activation or repression. Binds to the DNA consensus sequence 5'-[AT]AACAA[AT]-3'. SRY HMG box recognizes DNA by partial intercalation in the minor groove and promotes DNA bending. Also involved in pre-mRNA splicing (By similarity). In male adult brain involved in the maintenance of motor functions of dopaminergic neurons (By similarity).</text>
</comment>
<comment type="subunit">
    <text evidence="2">Interacts with CALM, EP300, HDAC3, KPNB1, ZNF208 isoform KRAB-O, PARP1, SLC9A3R2 and WT1. The interaction with EP300 modulates its DNA-binding activity. The interaction with KPNB1 is sensitive to dissociation by Ran in the GTP-bound form. Interaction with PARP1 impaired its DNA-binding activity.</text>
</comment>
<comment type="subcellular location">
    <subcellularLocation>
        <location evidence="2">Nucleus speckle</location>
    </subcellularLocation>
    <subcellularLocation>
        <location evidence="2">Cytoplasm</location>
    </subcellularLocation>
    <subcellularLocation>
        <location evidence="2">Nucleus</location>
    </subcellularLocation>
</comment>
<comment type="PTM">
    <text evidence="2">Acetylation of Lys-130 contributes to its nuclear localization and enhances its interaction with KPNB1. Deacetylated by HDAC3.</text>
</comment>
<comment type="similarity">
    <text evidence="4">Belongs to the SRY family.</text>
</comment>
<comment type="online information" name="Protein Spotlight">
    <link uri="https://www.proteinspotlight.org/back_issues/080"/>
    <text>The tenuous nature of sex - Issue 80 of March 2007</text>
</comment>
<name>SRY_AXIPR</name>
<evidence type="ECO:0000250" key="1">
    <source>
        <dbReference type="UniProtKB" id="P36394"/>
    </source>
</evidence>
<evidence type="ECO:0000250" key="2">
    <source>
        <dbReference type="UniProtKB" id="Q05066"/>
    </source>
</evidence>
<evidence type="ECO:0000255" key="3">
    <source>
        <dbReference type="PROSITE-ProRule" id="PRU00267"/>
    </source>
</evidence>
<evidence type="ECO:0000305" key="4"/>
<feature type="chain" id="PRO_0000048637" description="Sex-determining region Y protein">
    <location>
        <begin position="1"/>
        <end position="229"/>
    </location>
</feature>
<feature type="DNA-binding region" description="HMG box" evidence="3">
    <location>
        <begin position="54"/>
        <end position="122"/>
    </location>
</feature>
<gene>
    <name type="primary">SRY</name>
    <name type="synonym">TDF</name>
</gene>
<keyword id="KW-0007">Acetylation</keyword>
<keyword id="KW-0010">Activator</keyword>
<keyword id="KW-0112">Calmodulin-binding</keyword>
<keyword id="KW-0963">Cytoplasm</keyword>
<keyword id="KW-0221">Differentiation</keyword>
<keyword id="KW-0238">DNA-binding</keyword>
<keyword id="KW-0539">Nucleus</keyword>
<keyword id="KW-0678">Repressor</keyword>
<keyword id="KW-0726">Sexual differentiation</keyword>
<keyword id="KW-0804">Transcription</keyword>
<keyword id="KW-0805">Transcription regulation</keyword>
<protein>
    <recommendedName>
        <fullName>Sex-determining region Y protein</fullName>
    </recommendedName>
    <alternativeName>
        <fullName>Testis-determining factor</fullName>
    </alternativeName>
</protein>
<dbReference type="EMBL" id="AY244496">
    <property type="protein sequence ID" value="AAO92432.1"/>
    <property type="molecule type" value="Genomic_DNA"/>
</dbReference>
<dbReference type="SMR" id="Q863C2"/>
<dbReference type="GO" id="GO:0005737">
    <property type="term" value="C:cytoplasm"/>
    <property type="evidence" value="ECO:0007669"/>
    <property type="project" value="UniProtKB-SubCell"/>
</dbReference>
<dbReference type="GO" id="GO:0016607">
    <property type="term" value="C:nuclear speck"/>
    <property type="evidence" value="ECO:0007669"/>
    <property type="project" value="UniProtKB-SubCell"/>
</dbReference>
<dbReference type="GO" id="GO:0005634">
    <property type="term" value="C:nucleus"/>
    <property type="evidence" value="ECO:0000250"/>
    <property type="project" value="UniProtKB"/>
</dbReference>
<dbReference type="GO" id="GO:0005516">
    <property type="term" value="F:calmodulin binding"/>
    <property type="evidence" value="ECO:0007669"/>
    <property type="project" value="UniProtKB-KW"/>
</dbReference>
<dbReference type="GO" id="GO:0001228">
    <property type="term" value="F:DNA-binding transcription activator activity, RNA polymerase II-specific"/>
    <property type="evidence" value="ECO:0007669"/>
    <property type="project" value="TreeGrafter"/>
</dbReference>
<dbReference type="GO" id="GO:0000978">
    <property type="term" value="F:RNA polymerase II cis-regulatory region sequence-specific DNA binding"/>
    <property type="evidence" value="ECO:0007669"/>
    <property type="project" value="TreeGrafter"/>
</dbReference>
<dbReference type="GO" id="GO:0030154">
    <property type="term" value="P:cell differentiation"/>
    <property type="evidence" value="ECO:0007669"/>
    <property type="project" value="UniProtKB-KW"/>
</dbReference>
<dbReference type="GO" id="GO:0030238">
    <property type="term" value="P:male sex determination"/>
    <property type="evidence" value="ECO:0007669"/>
    <property type="project" value="InterPro"/>
</dbReference>
<dbReference type="GO" id="GO:0007548">
    <property type="term" value="P:sex differentiation"/>
    <property type="evidence" value="ECO:0007669"/>
    <property type="project" value="UniProtKB-KW"/>
</dbReference>
<dbReference type="CDD" id="cd22028">
    <property type="entry name" value="HMG-box_SoxA_SoxB_SoxG"/>
    <property type="match status" value="1"/>
</dbReference>
<dbReference type="FunFam" id="1.10.30.10:FF:000002">
    <property type="entry name" value="transcription factor Sox-2"/>
    <property type="match status" value="1"/>
</dbReference>
<dbReference type="Gene3D" id="1.10.30.10">
    <property type="entry name" value="High mobility group box domain"/>
    <property type="match status" value="1"/>
</dbReference>
<dbReference type="InterPro" id="IPR009071">
    <property type="entry name" value="HMG_box_dom"/>
</dbReference>
<dbReference type="InterPro" id="IPR036910">
    <property type="entry name" value="HMG_box_dom_sf"/>
</dbReference>
<dbReference type="InterPro" id="IPR017253">
    <property type="entry name" value="SRY"/>
</dbReference>
<dbReference type="InterPro" id="IPR050140">
    <property type="entry name" value="SRY-related_HMG-box_TF-like"/>
</dbReference>
<dbReference type="PANTHER" id="PTHR10270:SF161">
    <property type="entry name" value="SEX-DETERMINING REGION Y PROTEIN"/>
    <property type="match status" value="1"/>
</dbReference>
<dbReference type="PANTHER" id="PTHR10270">
    <property type="entry name" value="SOX TRANSCRIPTION FACTOR"/>
    <property type="match status" value="1"/>
</dbReference>
<dbReference type="Pfam" id="PF00505">
    <property type="entry name" value="HMG_box"/>
    <property type="match status" value="1"/>
</dbReference>
<dbReference type="PIRSF" id="PIRSF037653">
    <property type="entry name" value="SRY"/>
    <property type="match status" value="1"/>
</dbReference>
<dbReference type="SMART" id="SM00398">
    <property type="entry name" value="HMG"/>
    <property type="match status" value="1"/>
</dbReference>
<dbReference type="SUPFAM" id="SSF47095">
    <property type="entry name" value="HMG-box"/>
    <property type="match status" value="1"/>
</dbReference>
<dbReference type="PROSITE" id="PS50118">
    <property type="entry name" value="HMG_BOX_2"/>
    <property type="match status" value="1"/>
</dbReference>
<reference key="1">
    <citation type="submission" date="2003-02" db="EMBL/GenBank/DDBJ databases">
        <title>SRY DNA phylogeny of red deer.</title>
        <authorList>
            <person name="Ludt C.J."/>
            <person name="Kuehn R."/>
            <person name="Schroeder W."/>
            <person name="Rottmann O."/>
        </authorList>
    </citation>
    <scope>NUCLEOTIDE SEQUENCE [GENOMIC DNA]</scope>
    <source>
        <tissue>Corpus spongiosum</tissue>
    </source>
</reference>